<proteinExistence type="inferred from homology"/>
<comment type="cofactor">
    <cofactor evidence="1">
        <name>Mg(2+)</name>
        <dbReference type="ChEBI" id="CHEBI:18420"/>
    </cofactor>
    <cofactor evidence="1">
        <name>Mn(2+)</name>
        <dbReference type="ChEBI" id="CHEBI:29035"/>
    </cofactor>
    <text evidence="1">Binds 2 magnesium or manganese ions per subunit.</text>
</comment>
<comment type="similarity">
    <text evidence="1">Belongs to the RimK family.</text>
</comment>
<protein>
    <recommendedName>
        <fullName evidence="1">Probable alpha-L-glutamate ligase</fullName>
        <ecNumber evidence="1">6.3.2.-</ecNumber>
    </recommendedName>
</protein>
<gene>
    <name evidence="1" type="primary">rimK</name>
    <name type="ordered locus">XCC3108</name>
</gene>
<accession>Q8P665</accession>
<sequence length="291" mass="31195">MKIAILSRNSKLYSTRRLIEAGRTRGHTVRILDPLRCYMRIAADGFSLHYKGKPITGFDAVIPRIGASVTRYGTAVLRQLEFMGTYTPNPSDAILRSRDKLRAHQLLASQGIDMPVTVFGDNPDDTQDLLSMLGPPPHVVKLNEGAQGAGVILTEKASASRGVVEALRGLYANFIVQEFIGEAEGADLRCFVVGDRVVAAMRRQAADGDFRSNLHLGGTAAMAEASPQEQDVAVRSARALGLAVAGVDLIRSQRGPLVLEVNSTPGLEGVEGVCGVDVAGTIIQHLEQAIR</sequence>
<name>RIMK_XANCP</name>
<organism>
    <name type="scientific">Xanthomonas campestris pv. campestris (strain ATCC 33913 / DSM 3586 / NCPPB 528 / LMG 568 / P 25)</name>
    <dbReference type="NCBI Taxonomy" id="190485"/>
    <lineage>
        <taxon>Bacteria</taxon>
        <taxon>Pseudomonadati</taxon>
        <taxon>Pseudomonadota</taxon>
        <taxon>Gammaproteobacteria</taxon>
        <taxon>Lysobacterales</taxon>
        <taxon>Lysobacteraceae</taxon>
        <taxon>Xanthomonas</taxon>
    </lineage>
</organism>
<reference key="1">
    <citation type="journal article" date="2002" name="Nature">
        <title>Comparison of the genomes of two Xanthomonas pathogens with differing host specificities.</title>
        <authorList>
            <person name="da Silva A.C.R."/>
            <person name="Ferro J.A."/>
            <person name="Reinach F.C."/>
            <person name="Farah C.S."/>
            <person name="Furlan L.R."/>
            <person name="Quaggio R.B."/>
            <person name="Monteiro-Vitorello C.B."/>
            <person name="Van Sluys M.A."/>
            <person name="Almeida N.F. Jr."/>
            <person name="Alves L.M.C."/>
            <person name="do Amaral A.M."/>
            <person name="Bertolini M.C."/>
            <person name="Camargo L.E.A."/>
            <person name="Camarotte G."/>
            <person name="Cannavan F."/>
            <person name="Cardozo J."/>
            <person name="Chambergo F."/>
            <person name="Ciapina L.P."/>
            <person name="Cicarelli R.M.B."/>
            <person name="Coutinho L.L."/>
            <person name="Cursino-Santos J.R."/>
            <person name="El-Dorry H."/>
            <person name="Faria J.B."/>
            <person name="Ferreira A.J.S."/>
            <person name="Ferreira R.C.C."/>
            <person name="Ferro M.I.T."/>
            <person name="Formighieri E.F."/>
            <person name="Franco M.C."/>
            <person name="Greggio C.C."/>
            <person name="Gruber A."/>
            <person name="Katsuyama A.M."/>
            <person name="Kishi L.T."/>
            <person name="Leite R.P."/>
            <person name="Lemos E.G.M."/>
            <person name="Lemos M.V.F."/>
            <person name="Locali E.C."/>
            <person name="Machado M.A."/>
            <person name="Madeira A.M.B.N."/>
            <person name="Martinez-Rossi N.M."/>
            <person name="Martins E.C."/>
            <person name="Meidanis J."/>
            <person name="Menck C.F.M."/>
            <person name="Miyaki C.Y."/>
            <person name="Moon D.H."/>
            <person name="Moreira L.M."/>
            <person name="Novo M.T.M."/>
            <person name="Okura V.K."/>
            <person name="Oliveira M.C."/>
            <person name="Oliveira V.R."/>
            <person name="Pereira H.A."/>
            <person name="Rossi A."/>
            <person name="Sena J.A.D."/>
            <person name="Silva C."/>
            <person name="de Souza R.F."/>
            <person name="Spinola L.A.F."/>
            <person name="Takita M.A."/>
            <person name="Tamura R.E."/>
            <person name="Teixeira E.C."/>
            <person name="Tezza R.I.D."/>
            <person name="Trindade dos Santos M."/>
            <person name="Truffi D."/>
            <person name="Tsai S.M."/>
            <person name="White F.F."/>
            <person name="Setubal J.C."/>
            <person name="Kitajima J.P."/>
        </authorList>
    </citation>
    <scope>NUCLEOTIDE SEQUENCE [LARGE SCALE GENOMIC DNA]</scope>
    <source>
        <strain>ATCC 33913 / DSM 3586 / NCPPB 528 / LMG 568 / P 25</strain>
    </source>
</reference>
<evidence type="ECO:0000255" key="1">
    <source>
        <dbReference type="HAMAP-Rule" id="MF_01552"/>
    </source>
</evidence>
<dbReference type="EC" id="6.3.2.-" evidence="1"/>
<dbReference type="EMBL" id="AE008922">
    <property type="protein sequence ID" value="AAM42379.1"/>
    <property type="molecule type" value="Genomic_DNA"/>
</dbReference>
<dbReference type="RefSeq" id="NP_638455.1">
    <property type="nucleotide sequence ID" value="NC_003902.1"/>
</dbReference>
<dbReference type="RefSeq" id="WP_011038222.1">
    <property type="nucleotide sequence ID" value="NC_003902.1"/>
</dbReference>
<dbReference type="SMR" id="Q8P665"/>
<dbReference type="STRING" id="190485.XCC3108"/>
<dbReference type="EnsemblBacteria" id="AAM42379">
    <property type="protein sequence ID" value="AAM42379"/>
    <property type="gene ID" value="XCC3108"/>
</dbReference>
<dbReference type="KEGG" id="xcc:XCC3108"/>
<dbReference type="PATRIC" id="fig|190485.4.peg.3320"/>
<dbReference type="eggNOG" id="COG0189">
    <property type="taxonomic scope" value="Bacteria"/>
</dbReference>
<dbReference type="HOGENOM" id="CLU_054353_0_1_6"/>
<dbReference type="OrthoDB" id="3865600at2"/>
<dbReference type="Proteomes" id="UP000001010">
    <property type="component" value="Chromosome"/>
</dbReference>
<dbReference type="GO" id="GO:0005737">
    <property type="term" value="C:cytoplasm"/>
    <property type="evidence" value="ECO:0000318"/>
    <property type="project" value="GO_Central"/>
</dbReference>
<dbReference type="GO" id="GO:0005524">
    <property type="term" value="F:ATP binding"/>
    <property type="evidence" value="ECO:0007669"/>
    <property type="project" value="UniProtKB-UniRule"/>
</dbReference>
<dbReference type="GO" id="GO:0046872">
    <property type="term" value="F:metal ion binding"/>
    <property type="evidence" value="ECO:0007669"/>
    <property type="project" value="UniProtKB-KW"/>
</dbReference>
<dbReference type="GO" id="GO:0018169">
    <property type="term" value="F:ribosomal S6-glutamic acid ligase activity"/>
    <property type="evidence" value="ECO:0000318"/>
    <property type="project" value="GO_Central"/>
</dbReference>
<dbReference type="GO" id="GO:0036211">
    <property type="term" value="P:protein modification process"/>
    <property type="evidence" value="ECO:0007669"/>
    <property type="project" value="InterPro"/>
</dbReference>
<dbReference type="GO" id="GO:0009432">
    <property type="term" value="P:SOS response"/>
    <property type="evidence" value="ECO:0000318"/>
    <property type="project" value="GO_Central"/>
</dbReference>
<dbReference type="GO" id="GO:0006412">
    <property type="term" value="P:translation"/>
    <property type="evidence" value="ECO:0007669"/>
    <property type="project" value="UniProtKB-KW"/>
</dbReference>
<dbReference type="FunFam" id="3.40.50.20:FF:000004">
    <property type="entry name" value="Probable alpha-L-glutamate ligase"/>
    <property type="match status" value="1"/>
</dbReference>
<dbReference type="FunFam" id="3.30.1490.20:FF:000005">
    <property type="entry name" value="Probable alpha-L-glutamate ligase 1"/>
    <property type="match status" value="1"/>
</dbReference>
<dbReference type="Gene3D" id="3.40.50.20">
    <property type="match status" value="1"/>
</dbReference>
<dbReference type="Gene3D" id="3.30.1490.20">
    <property type="entry name" value="ATP-grasp fold, A domain"/>
    <property type="match status" value="1"/>
</dbReference>
<dbReference type="Gene3D" id="3.30.470.20">
    <property type="entry name" value="ATP-grasp fold, B domain"/>
    <property type="match status" value="1"/>
</dbReference>
<dbReference type="HAMAP" id="MF_01552">
    <property type="entry name" value="RimK"/>
    <property type="match status" value="1"/>
</dbReference>
<dbReference type="InterPro" id="IPR011761">
    <property type="entry name" value="ATP-grasp"/>
</dbReference>
<dbReference type="InterPro" id="IPR013651">
    <property type="entry name" value="ATP-grasp_RimK-type"/>
</dbReference>
<dbReference type="InterPro" id="IPR013815">
    <property type="entry name" value="ATP_grasp_subdomain_1"/>
</dbReference>
<dbReference type="InterPro" id="IPR023533">
    <property type="entry name" value="RimK"/>
</dbReference>
<dbReference type="InterPro" id="IPR041107">
    <property type="entry name" value="Rimk_N"/>
</dbReference>
<dbReference type="InterPro" id="IPR004666">
    <property type="entry name" value="Rp_bS6_RimK/Lys_biosynth_LsyX"/>
</dbReference>
<dbReference type="NCBIfam" id="NF007764">
    <property type="entry name" value="PRK10446.1"/>
    <property type="match status" value="1"/>
</dbReference>
<dbReference type="NCBIfam" id="TIGR00768">
    <property type="entry name" value="rimK_fam"/>
    <property type="match status" value="1"/>
</dbReference>
<dbReference type="PANTHER" id="PTHR21621:SF7">
    <property type="entry name" value="RIBOSOMAL PROTEIN BS6--L-GLUTAMATE LIGASE"/>
    <property type="match status" value="1"/>
</dbReference>
<dbReference type="PANTHER" id="PTHR21621">
    <property type="entry name" value="RIBOSOMAL PROTEIN S6 MODIFICATION PROTEIN"/>
    <property type="match status" value="1"/>
</dbReference>
<dbReference type="Pfam" id="PF08443">
    <property type="entry name" value="RimK"/>
    <property type="match status" value="1"/>
</dbReference>
<dbReference type="Pfam" id="PF18030">
    <property type="entry name" value="Rimk_N"/>
    <property type="match status" value="1"/>
</dbReference>
<dbReference type="SUPFAM" id="SSF56059">
    <property type="entry name" value="Glutathione synthetase ATP-binding domain-like"/>
    <property type="match status" value="1"/>
</dbReference>
<dbReference type="PROSITE" id="PS50975">
    <property type="entry name" value="ATP_GRASP"/>
    <property type="match status" value="1"/>
</dbReference>
<keyword id="KW-0067">ATP-binding</keyword>
<keyword id="KW-0436">Ligase</keyword>
<keyword id="KW-0460">Magnesium</keyword>
<keyword id="KW-0464">Manganese</keyword>
<keyword id="KW-0479">Metal-binding</keyword>
<keyword id="KW-0547">Nucleotide-binding</keyword>
<keyword id="KW-0648">Protein biosynthesis</keyword>
<keyword id="KW-1185">Reference proteome</keyword>
<feature type="chain" id="PRO_0000205493" description="Probable alpha-L-glutamate ligase">
    <location>
        <begin position="1"/>
        <end position="291"/>
    </location>
</feature>
<feature type="domain" description="ATP-grasp" evidence="1">
    <location>
        <begin position="104"/>
        <end position="287"/>
    </location>
</feature>
<feature type="binding site" evidence="1">
    <location>
        <position position="141"/>
    </location>
    <ligand>
        <name>ATP</name>
        <dbReference type="ChEBI" id="CHEBI:30616"/>
    </ligand>
</feature>
<feature type="binding site" evidence="1">
    <location>
        <begin position="178"/>
        <end position="179"/>
    </location>
    <ligand>
        <name>ATP</name>
        <dbReference type="ChEBI" id="CHEBI:30616"/>
    </ligand>
</feature>
<feature type="binding site" evidence="1">
    <location>
        <position position="187"/>
    </location>
    <ligand>
        <name>ATP</name>
        <dbReference type="ChEBI" id="CHEBI:30616"/>
    </ligand>
</feature>
<feature type="binding site" evidence="1">
    <location>
        <begin position="211"/>
        <end position="213"/>
    </location>
    <ligand>
        <name>ATP</name>
        <dbReference type="ChEBI" id="CHEBI:30616"/>
    </ligand>
</feature>
<feature type="binding site" evidence="1">
    <location>
        <position position="248"/>
    </location>
    <ligand>
        <name>Mg(2+)</name>
        <dbReference type="ChEBI" id="CHEBI:18420"/>
        <label>1</label>
    </ligand>
</feature>
<feature type="binding site" evidence="1">
    <location>
        <position position="248"/>
    </location>
    <ligand>
        <name>Mn(2+)</name>
        <dbReference type="ChEBI" id="CHEBI:29035"/>
        <label>1</label>
    </ligand>
</feature>
<feature type="binding site" evidence="1">
    <location>
        <position position="260"/>
    </location>
    <ligand>
        <name>Mg(2+)</name>
        <dbReference type="ChEBI" id="CHEBI:18420"/>
        <label>1</label>
    </ligand>
</feature>
<feature type="binding site" evidence="1">
    <location>
        <position position="260"/>
    </location>
    <ligand>
        <name>Mg(2+)</name>
        <dbReference type="ChEBI" id="CHEBI:18420"/>
        <label>2</label>
    </ligand>
</feature>
<feature type="binding site" evidence="1">
    <location>
        <position position="260"/>
    </location>
    <ligand>
        <name>Mn(2+)</name>
        <dbReference type="ChEBI" id="CHEBI:29035"/>
        <label>1</label>
    </ligand>
</feature>
<feature type="binding site" evidence="1">
    <location>
        <position position="260"/>
    </location>
    <ligand>
        <name>Mn(2+)</name>
        <dbReference type="ChEBI" id="CHEBI:29035"/>
        <label>2</label>
    </ligand>
</feature>
<feature type="binding site" evidence="1">
    <location>
        <position position="262"/>
    </location>
    <ligand>
        <name>Mg(2+)</name>
        <dbReference type="ChEBI" id="CHEBI:18420"/>
        <label>2</label>
    </ligand>
</feature>
<feature type="binding site" evidence="1">
    <location>
        <position position="262"/>
    </location>
    <ligand>
        <name>Mn(2+)</name>
        <dbReference type="ChEBI" id="CHEBI:29035"/>
        <label>2</label>
    </ligand>
</feature>